<accession>Q04C46</accession>
<evidence type="ECO:0000255" key="1">
    <source>
        <dbReference type="HAMAP-Rule" id="MF_00101"/>
    </source>
</evidence>
<keyword id="KW-0963">Cytoplasm</keyword>
<keyword id="KW-0275">Fatty acid biosynthesis</keyword>
<keyword id="KW-0276">Fatty acid metabolism</keyword>
<keyword id="KW-0444">Lipid biosynthesis</keyword>
<keyword id="KW-0443">Lipid metabolism</keyword>
<keyword id="KW-0460">Magnesium</keyword>
<keyword id="KW-0479">Metal-binding</keyword>
<keyword id="KW-0808">Transferase</keyword>
<organism>
    <name type="scientific">Lactobacillus delbrueckii subsp. bulgaricus (strain ATCC BAA-365 / Lb-18)</name>
    <dbReference type="NCBI Taxonomy" id="321956"/>
    <lineage>
        <taxon>Bacteria</taxon>
        <taxon>Bacillati</taxon>
        <taxon>Bacillota</taxon>
        <taxon>Bacilli</taxon>
        <taxon>Lactobacillales</taxon>
        <taxon>Lactobacillaceae</taxon>
        <taxon>Lactobacillus</taxon>
    </lineage>
</organism>
<gene>
    <name evidence="1" type="primary">acpS</name>
    <name type="ordered locus">LBUL_0314</name>
</gene>
<comment type="function">
    <text evidence="1">Transfers the 4'-phosphopantetheine moiety from coenzyme A to a Ser of acyl-carrier-protein.</text>
</comment>
<comment type="catalytic activity">
    <reaction evidence="1">
        <text>apo-[ACP] + CoA = holo-[ACP] + adenosine 3',5'-bisphosphate + H(+)</text>
        <dbReference type="Rhea" id="RHEA:12068"/>
        <dbReference type="Rhea" id="RHEA-COMP:9685"/>
        <dbReference type="Rhea" id="RHEA-COMP:9690"/>
        <dbReference type="ChEBI" id="CHEBI:15378"/>
        <dbReference type="ChEBI" id="CHEBI:29999"/>
        <dbReference type="ChEBI" id="CHEBI:57287"/>
        <dbReference type="ChEBI" id="CHEBI:58343"/>
        <dbReference type="ChEBI" id="CHEBI:64479"/>
        <dbReference type="EC" id="2.7.8.7"/>
    </reaction>
</comment>
<comment type="cofactor">
    <cofactor evidence="1">
        <name>Mg(2+)</name>
        <dbReference type="ChEBI" id="CHEBI:18420"/>
    </cofactor>
</comment>
<comment type="subcellular location">
    <subcellularLocation>
        <location evidence="1">Cytoplasm</location>
    </subcellularLocation>
</comment>
<comment type="similarity">
    <text evidence="1">Belongs to the P-Pant transferase superfamily. AcpS family.</text>
</comment>
<sequence>MIKNIGVDQIEVDRIAKVVDRGDGFARKVLTDREFAQYQDLTHKRKIEYLGGRFAIKEAFSKAWGTGIGQAVSFEDVETLRTESGAPVTTSRIFTGRIFSSIAHDDHEIVAVVVLEEPAGWRRAIGKLSHLLSGRKK</sequence>
<proteinExistence type="inferred from homology"/>
<name>ACPS_LACDB</name>
<reference key="1">
    <citation type="journal article" date="2006" name="Proc. Natl. Acad. Sci. U.S.A.">
        <title>Comparative genomics of the lactic acid bacteria.</title>
        <authorList>
            <person name="Makarova K.S."/>
            <person name="Slesarev A."/>
            <person name="Wolf Y.I."/>
            <person name="Sorokin A."/>
            <person name="Mirkin B."/>
            <person name="Koonin E.V."/>
            <person name="Pavlov A."/>
            <person name="Pavlova N."/>
            <person name="Karamychev V."/>
            <person name="Polouchine N."/>
            <person name="Shakhova V."/>
            <person name="Grigoriev I."/>
            <person name="Lou Y."/>
            <person name="Rohksar D."/>
            <person name="Lucas S."/>
            <person name="Huang K."/>
            <person name="Goodstein D.M."/>
            <person name="Hawkins T."/>
            <person name="Plengvidhya V."/>
            <person name="Welker D."/>
            <person name="Hughes J."/>
            <person name="Goh Y."/>
            <person name="Benson A."/>
            <person name="Baldwin K."/>
            <person name="Lee J.-H."/>
            <person name="Diaz-Muniz I."/>
            <person name="Dosti B."/>
            <person name="Smeianov V."/>
            <person name="Wechter W."/>
            <person name="Barabote R."/>
            <person name="Lorca G."/>
            <person name="Altermann E."/>
            <person name="Barrangou R."/>
            <person name="Ganesan B."/>
            <person name="Xie Y."/>
            <person name="Rawsthorne H."/>
            <person name="Tamir D."/>
            <person name="Parker C."/>
            <person name="Breidt F."/>
            <person name="Broadbent J.R."/>
            <person name="Hutkins R."/>
            <person name="O'Sullivan D."/>
            <person name="Steele J."/>
            <person name="Unlu G."/>
            <person name="Saier M.H. Jr."/>
            <person name="Klaenhammer T."/>
            <person name="Richardson P."/>
            <person name="Kozyavkin S."/>
            <person name="Weimer B.C."/>
            <person name="Mills D.A."/>
        </authorList>
    </citation>
    <scope>NUCLEOTIDE SEQUENCE [LARGE SCALE GENOMIC DNA]</scope>
    <source>
        <strain>ATCC BAA-365 / Lb-18</strain>
    </source>
</reference>
<feature type="chain" id="PRO_1000008439" description="Holo-[acyl-carrier-protein] synthase">
    <location>
        <begin position="1"/>
        <end position="137"/>
    </location>
</feature>
<feature type="binding site" evidence="1">
    <location>
        <position position="8"/>
    </location>
    <ligand>
        <name>Mg(2+)</name>
        <dbReference type="ChEBI" id="CHEBI:18420"/>
    </ligand>
</feature>
<feature type="binding site" evidence="1">
    <location>
        <position position="58"/>
    </location>
    <ligand>
        <name>Mg(2+)</name>
        <dbReference type="ChEBI" id="CHEBI:18420"/>
    </ligand>
</feature>
<protein>
    <recommendedName>
        <fullName evidence="1">Holo-[acyl-carrier-protein] synthase</fullName>
        <shortName evidence="1">Holo-ACP synthase</shortName>
        <ecNumber evidence="1">2.7.8.7</ecNumber>
    </recommendedName>
    <alternativeName>
        <fullName evidence="1">4'-phosphopantetheinyl transferase AcpS</fullName>
    </alternativeName>
</protein>
<dbReference type="EC" id="2.7.8.7" evidence="1"/>
<dbReference type="EMBL" id="CP000412">
    <property type="protein sequence ID" value="ABJ57976.1"/>
    <property type="molecule type" value="Genomic_DNA"/>
</dbReference>
<dbReference type="RefSeq" id="WP_003620772.1">
    <property type="nucleotide sequence ID" value="NC_008529.1"/>
</dbReference>
<dbReference type="SMR" id="Q04C46"/>
<dbReference type="KEGG" id="lbu:LBUL_0314"/>
<dbReference type="HOGENOM" id="CLU_089696_1_2_9"/>
<dbReference type="BioCyc" id="LDEL321956:LBUL_RS01470-MONOMER"/>
<dbReference type="GO" id="GO:0005737">
    <property type="term" value="C:cytoplasm"/>
    <property type="evidence" value="ECO:0007669"/>
    <property type="project" value="UniProtKB-SubCell"/>
</dbReference>
<dbReference type="GO" id="GO:0008897">
    <property type="term" value="F:holo-[acyl-carrier-protein] synthase activity"/>
    <property type="evidence" value="ECO:0007669"/>
    <property type="project" value="UniProtKB-UniRule"/>
</dbReference>
<dbReference type="GO" id="GO:0000287">
    <property type="term" value="F:magnesium ion binding"/>
    <property type="evidence" value="ECO:0007669"/>
    <property type="project" value="UniProtKB-UniRule"/>
</dbReference>
<dbReference type="GO" id="GO:0006633">
    <property type="term" value="P:fatty acid biosynthetic process"/>
    <property type="evidence" value="ECO:0007669"/>
    <property type="project" value="UniProtKB-UniRule"/>
</dbReference>
<dbReference type="Gene3D" id="3.90.470.20">
    <property type="entry name" value="4'-phosphopantetheinyl transferase domain"/>
    <property type="match status" value="1"/>
</dbReference>
<dbReference type="HAMAP" id="MF_00101">
    <property type="entry name" value="AcpS"/>
    <property type="match status" value="1"/>
</dbReference>
<dbReference type="InterPro" id="IPR008278">
    <property type="entry name" value="4-PPantetheinyl_Trfase_dom"/>
</dbReference>
<dbReference type="InterPro" id="IPR037143">
    <property type="entry name" value="4-PPantetheinyl_Trfase_dom_sf"/>
</dbReference>
<dbReference type="InterPro" id="IPR002582">
    <property type="entry name" value="ACPS"/>
</dbReference>
<dbReference type="InterPro" id="IPR004568">
    <property type="entry name" value="Ppantetheine-prot_Trfase_dom"/>
</dbReference>
<dbReference type="NCBIfam" id="TIGR00516">
    <property type="entry name" value="acpS"/>
    <property type="match status" value="1"/>
</dbReference>
<dbReference type="NCBIfam" id="TIGR00556">
    <property type="entry name" value="pantethn_trn"/>
    <property type="match status" value="1"/>
</dbReference>
<dbReference type="Pfam" id="PF01648">
    <property type="entry name" value="ACPS"/>
    <property type="match status" value="1"/>
</dbReference>
<dbReference type="SUPFAM" id="SSF56214">
    <property type="entry name" value="4'-phosphopantetheinyl transferase"/>
    <property type="match status" value="1"/>
</dbReference>